<evidence type="ECO:0000255" key="1">
    <source>
        <dbReference type="HAMAP-Rule" id="MF_00394"/>
    </source>
</evidence>
<comment type="function">
    <text evidence="1">Catalyzes the reduction of the glycolytic intermediate dihydroxyacetone phosphate (DHAP) to sn-glycerol 3-phosphate (G3P), the key precursor for phospholipid synthesis.</text>
</comment>
<comment type="catalytic activity">
    <reaction evidence="1">
        <text>sn-glycerol 3-phosphate + NAD(+) = dihydroxyacetone phosphate + NADH + H(+)</text>
        <dbReference type="Rhea" id="RHEA:11092"/>
        <dbReference type="ChEBI" id="CHEBI:15378"/>
        <dbReference type="ChEBI" id="CHEBI:57540"/>
        <dbReference type="ChEBI" id="CHEBI:57597"/>
        <dbReference type="ChEBI" id="CHEBI:57642"/>
        <dbReference type="ChEBI" id="CHEBI:57945"/>
        <dbReference type="EC" id="1.1.1.94"/>
    </reaction>
    <physiologicalReaction direction="right-to-left" evidence="1">
        <dbReference type="Rhea" id="RHEA:11094"/>
    </physiologicalReaction>
</comment>
<comment type="catalytic activity">
    <reaction evidence="1">
        <text>sn-glycerol 3-phosphate + NADP(+) = dihydroxyacetone phosphate + NADPH + H(+)</text>
        <dbReference type="Rhea" id="RHEA:11096"/>
        <dbReference type="ChEBI" id="CHEBI:15378"/>
        <dbReference type="ChEBI" id="CHEBI:57597"/>
        <dbReference type="ChEBI" id="CHEBI:57642"/>
        <dbReference type="ChEBI" id="CHEBI:57783"/>
        <dbReference type="ChEBI" id="CHEBI:58349"/>
        <dbReference type="EC" id="1.1.1.94"/>
    </reaction>
    <physiologicalReaction direction="right-to-left" evidence="1">
        <dbReference type="Rhea" id="RHEA:11098"/>
    </physiologicalReaction>
</comment>
<comment type="pathway">
    <text evidence="1">Membrane lipid metabolism; glycerophospholipid metabolism.</text>
</comment>
<comment type="subcellular location">
    <subcellularLocation>
        <location evidence="1">Cytoplasm</location>
    </subcellularLocation>
</comment>
<comment type="similarity">
    <text evidence="1">Belongs to the NAD-dependent glycerol-3-phosphate dehydrogenase family.</text>
</comment>
<sequence length="345" mass="36960">MTQTLVNNAYGKEISMTVIGAGSYGTSLAISLSRNGANVVLWGHEPEHMAKLEADRANHEFLPGIEFPPSLIVESDLAKAVQASRDLLVVVPSHVFGIVLNSLKPYLRDDSRICWATKGLEPETGRLLKDVAFDVLGEHYSLAVLSGPTFAKELAAGMPTAISVASPDAQFVADLQEKIHCSKTFRVYANSDFTGMQLGGAVKNVIAIGAGMSDGIGFGANARTALITRGLAEMCRLGAALGAQPETFMGMAGLGDLVLTCTDNQSRNRRFGLALGQGKDVDTAQADIGQVVEGYRNTKEVWMLAQRMGVEMPIVDQIYQVLYQGKDARLAAQDLLARDKKSEGK</sequence>
<dbReference type="EC" id="1.1.1.94" evidence="1"/>
<dbReference type="EMBL" id="AE016795">
    <property type="protein sequence ID" value="AAO09733.1"/>
    <property type="molecule type" value="Genomic_DNA"/>
</dbReference>
<dbReference type="RefSeq" id="WP_011079262.1">
    <property type="nucleotide sequence ID" value="NC_004459.3"/>
</dbReference>
<dbReference type="SMR" id="Q8DCW4"/>
<dbReference type="KEGG" id="vvu:VV1_1277"/>
<dbReference type="HOGENOM" id="CLU_033449_0_2_6"/>
<dbReference type="UniPathway" id="UPA00940"/>
<dbReference type="Proteomes" id="UP000002275">
    <property type="component" value="Chromosome 1"/>
</dbReference>
<dbReference type="GO" id="GO:0005829">
    <property type="term" value="C:cytosol"/>
    <property type="evidence" value="ECO:0007669"/>
    <property type="project" value="TreeGrafter"/>
</dbReference>
<dbReference type="GO" id="GO:0047952">
    <property type="term" value="F:glycerol-3-phosphate dehydrogenase [NAD(P)+] activity"/>
    <property type="evidence" value="ECO:0007669"/>
    <property type="project" value="UniProtKB-UniRule"/>
</dbReference>
<dbReference type="GO" id="GO:0051287">
    <property type="term" value="F:NAD binding"/>
    <property type="evidence" value="ECO:0007669"/>
    <property type="project" value="InterPro"/>
</dbReference>
<dbReference type="GO" id="GO:0005975">
    <property type="term" value="P:carbohydrate metabolic process"/>
    <property type="evidence" value="ECO:0007669"/>
    <property type="project" value="InterPro"/>
</dbReference>
<dbReference type="GO" id="GO:0046167">
    <property type="term" value="P:glycerol-3-phosphate biosynthetic process"/>
    <property type="evidence" value="ECO:0007669"/>
    <property type="project" value="UniProtKB-UniRule"/>
</dbReference>
<dbReference type="GO" id="GO:0046168">
    <property type="term" value="P:glycerol-3-phosphate catabolic process"/>
    <property type="evidence" value="ECO:0007669"/>
    <property type="project" value="InterPro"/>
</dbReference>
<dbReference type="GO" id="GO:0046474">
    <property type="term" value="P:glycerophospholipid biosynthetic process"/>
    <property type="evidence" value="ECO:0007669"/>
    <property type="project" value="TreeGrafter"/>
</dbReference>
<dbReference type="FunFam" id="1.10.1040.10:FF:000001">
    <property type="entry name" value="Glycerol-3-phosphate dehydrogenase [NAD(P)+]"/>
    <property type="match status" value="1"/>
</dbReference>
<dbReference type="FunFam" id="3.40.50.720:FF:000019">
    <property type="entry name" value="Glycerol-3-phosphate dehydrogenase [NAD(P)+]"/>
    <property type="match status" value="1"/>
</dbReference>
<dbReference type="Gene3D" id="1.10.1040.10">
    <property type="entry name" value="N-(1-d-carboxylethyl)-l-norvaline Dehydrogenase, domain 2"/>
    <property type="match status" value="1"/>
</dbReference>
<dbReference type="Gene3D" id="3.40.50.720">
    <property type="entry name" value="NAD(P)-binding Rossmann-like Domain"/>
    <property type="match status" value="1"/>
</dbReference>
<dbReference type="HAMAP" id="MF_00394">
    <property type="entry name" value="NAD_Glyc3P_dehydrog"/>
    <property type="match status" value="1"/>
</dbReference>
<dbReference type="InterPro" id="IPR008927">
    <property type="entry name" value="6-PGluconate_DH-like_C_sf"/>
</dbReference>
<dbReference type="InterPro" id="IPR013328">
    <property type="entry name" value="6PGD_dom2"/>
</dbReference>
<dbReference type="InterPro" id="IPR006168">
    <property type="entry name" value="G3P_DH_NAD-dep"/>
</dbReference>
<dbReference type="InterPro" id="IPR006109">
    <property type="entry name" value="G3P_DH_NAD-dep_C"/>
</dbReference>
<dbReference type="InterPro" id="IPR011128">
    <property type="entry name" value="G3P_DH_NAD-dep_N"/>
</dbReference>
<dbReference type="InterPro" id="IPR036291">
    <property type="entry name" value="NAD(P)-bd_dom_sf"/>
</dbReference>
<dbReference type="NCBIfam" id="NF000939">
    <property type="entry name" value="PRK00094.1-1"/>
    <property type="match status" value="1"/>
</dbReference>
<dbReference type="NCBIfam" id="NF000940">
    <property type="entry name" value="PRK00094.1-2"/>
    <property type="match status" value="1"/>
</dbReference>
<dbReference type="NCBIfam" id="NF000942">
    <property type="entry name" value="PRK00094.1-4"/>
    <property type="match status" value="1"/>
</dbReference>
<dbReference type="PANTHER" id="PTHR11728">
    <property type="entry name" value="GLYCEROL-3-PHOSPHATE DEHYDROGENASE"/>
    <property type="match status" value="1"/>
</dbReference>
<dbReference type="PANTHER" id="PTHR11728:SF1">
    <property type="entry name" value="GLYCEROL-3-PHOSPHATE DEHYDROGENASE [NAD(+)] 2, CHLOROPLASTIC"/>
    <property type="match status" value="1"/>
</dbReference>
<dbReference type="Pfam" id="PF07479">
    <property type="entry name" value="NAD_Gly3P_dh_C"/>
    <property type="match status" value="1"/>
</dbReference>
<dbReference type="Pfam" id="PF01210">
    <property type="entry name" value="NAD_Gly3P_dh_N"/>
    <property type="match status" value="1"/>
</dbReference>
<dbReference type="PIRSF" id="PIRSF000114">
    <property type="entry name" value="Glycerol-3-P_dh"/>
    <property type="match status" value="1"/>
</dbReference>
<dbReference type="PRINTS" id="PR00077">
    <property type="entry name" value="GPDHDRGNASE"/>
</dbReference>
<dbReference type="SUPFAM" id="SSF48179">
    <property type="entry name" value="6-phosphogluconate dehydrogenase C-terminal domain-like"/>
    <property type="match status" value="1"/>
</dbReference>
<dbReference type="SUPFAM" id="SSF51735">
    <property type="entry name" value="NAD(P)-binding Rossmann-fold domains"/>
    <property type="match status" value="1"/>
</dbReference>
<dbReference type="PROSITE" id="PS00957">
    <property type="entry name" value="NAD_G3PDH"/>
    <property type="match status" value="1"/>
</dbReference>
<reference key="1">
    <citation type="submission" date="2002-12" db="EMBL/GenBank/DDBJ databases">
        <title>Complete genome sequence of Vibrio vulnificus CMCP6.</title>
        <authorList>
            <person name="Rhee J.H."/>
            <person name="Kim S.Y."/>
            <person name="Chung S.S."/>
            <person name="Kim J.J."/>
            <person name="Moon Y.H."/>
            <person name="Jeong H."/>
            <person name="Choy H.E."/>
        </authorList>
    </citation>
    <scope>NUCLEOTIDE SEQUENCE [LARGE SCALE GENOMIC DNA]</scope>
    <source>
        <strain>CMCP6</strain>
    </source>
</reference>
<proteinExistence type="inferred from homology"/>
<name>GPDA_VIBVU</name>
<keyword id="KW-0963">Cytoplasm</keyword>
<keyword id="KW-0444">Lipid biosynthesis</keyword>
<keyword id="KW-0443">Lipid metabolism</keyword>
<keyword id="KW-0520">NAD</keyword>
<keyword id="KW-0521">NADP</keyword>
<keyword id="KW-0547">Nucleotide-binding</keyword>
<keyword id="KW-0560">Oxidoreductase</keyword>
<keyword id="KW-0594">Phospholipid biosynthesis</keyword>
<keyword id="KW-1208">Phospholipid metabolism</keyword>
<feature type="chain" id="PRO_0000138056" description="Glycerol-3-phosphate dehydrogenase [NAD(P)+]">
    <location>
        <begin position="1"/>
        <end position="345"/>
    </location>
</feature>
<feature type="active site" description="Proton acceptor" evidence="1">
    <location>
        <position position="203"/>
    </location>
</feature>
<feature type="binding site" evidence="1">
    <location>
        <position position="23"/>
    </location>
    <ligand>
        <name>NADPH</name>
        <dbReference type="ChEBI" id="CHEBI:57783"/>
    </ligand>
</feature>
<feature type="binding site" evidence="1">
    <location>
        <position position="24"/>
    </location>
    <ligand>
        <name>NADPH</name>
        <dbReference type="ChEBI" id="CHEBI:57783"/>
    </ligand>
</feature>
<feature type="binding site" evidence="1">
    <location>
        <position position="44"/>
    </location>
    <ligand>
        <name>NADPH</name>
        <dbReference type="ChEBI" id="CHEBI:57783"/>
    </ligand>
</feature>
<feature type="binding site" evidence="1">
    <location>
        <position position="118"/>
    </location>
    <ligand>
        <name>NADPH</name>
        <dbReference type="ChEBI" id="CHEBI:57783"/>
    </ligand>
</feature>
<feature type="binding site" evidence="1">
    <location>
        <position position="118"/>
    </location>
    <ligand>
        <name>sn-glycerol 3-phosphate</name>
        <dbReference type="ChEBI" id="CHEBI:57597"/>
    </ligand>
</feature>
<feature type="binding site" evidence="1">
    <location>
        <position position="147"/>
    </location>
    <ligand>
        <name>sn-glycerol 3-phosphate</name>
        <dbReference type="ChEBI" id="CHEBI:57597"/>
    </ligand>
</feature>
<feature type="binding site" evidence="1">
    <location>
        <position position="149"/>
    </location>
    <ligand>
        <name>sn-glycerol 3-phosphate</name>
        <dbReference type="ChEBI" id="CHEBI:57597"/>
    </ligand>
</feature>
<feature type="binding site" evidence="1">
    <location>
        <position position="151"/>
    </location>
    <ligand>
        <name>NADPH</name>
        <dbReference type="ChEBI" id="CHEBI:57783"/>
    </ligand>
</feature>
<feature type="binding site" evidence="1">
    <location>
        <position position="203"/>
    </location>
    <ligand>
        <name>sn-glycerol 3-phosphate</name>
        <dbReference type="ChEBI" id="CHEBI:57597"/>
    </ligand>
</feature>
<feature type="binding site" evidence="1">
    <location>
        <position position="256"/>
    </location>
    <ligand>
        <name>sn-glycerol 3-phosphate</name>
        <dbReference type="ChEBI" id="CHEBI:57597"/>
    </ligand>
</feature>
<feature type="binding site" evidence="1">
    <location>
        <position position="266"/>
    </location>
    <ligand>
        <name>sn-glycerol 3-phosphate</name>
        <dbReference type="ChEBI" id="CHEBI:57597"/>
    </ligand>
</feature>
<feature type="binding site" evidence="1">
    <location>
        <position position="267"/>
    </location>
    <ligand>
        <name>NADPH</name>
        <dbReference type="ChEBI" id="CHEBI:57783"/>
    </ligand>
</feature>
<feature type="binding site" evidence="1">
    <location>
        <position position="267"/>
    </location>
    <ligand>
        <name>sn-glycerol 3-phosphate</name>
        <dbReference type="ChEBI" id="CHEBI:57597"/>
    </ligand>
</feature>
<feature type="binding site" evidence="1">
    <location>
        <position position="268"/>
    </location>
    <ligand>
        <name>sn-glycerol 3-phosphate</name>
        <dbReference type="ChEBI" id="CHEBI:57597"/>
    </ligand>
</feature>
<feature type="binding site" evidence="1">
    <location>
        <position position="291"/>
    </location>
    <ligand>
        <name>NADPH</name>
        <dbReference type="ChEBI" id="CHEBI:57783"/>
    </ligand>
</feature>
<feature type="binding site" evidence="1">
    <location>
        <position position="293"/>
    </location>
    <ligand>
        <name>NADPH</name>
        <dbReference type="ChEBI" id="CHEBI:57783"/>
    </ligand>
</feature>
<gene>
    <name evidence="1" type="primary">gpsA</name>
    <name type="ordered locus">VV1_1277</name>
</gene>
<protein>
    <recommendedName>
        <fullName evidence="1">Glycerol-3-phosphate dehydrogenase [NAD(P)+]</fullName>
        <ecNumber evidence="1">1.1.1.94</ecNumber>
    </recommendedName>
    <alternativeName>
        <fullName evidence="1">NAD(P)(+)-dependent glycerol-3-phosphate dehydrogenase</fullName>
    </alternativeName>
    <alternativeName>
        <fullName evidence="1">NAD(P)H-dependent dihydroxyacetone-phosphate reductase</fullName>
    </alternativeName>
</protein>
<accession>Q8DCW4</accession>
<organism>
    <name type="scientific">Vibrio vulnificus (strain CMCP6)</name>
    <dbReference type="NCBI Taxonomy" id="216895"/>
    <lineage>
        <taxon>Bacteria</taxon>
        <taxon>Pseudomonadati</taxon>
        <taxon>Pseudomonadota</taxon>
        <taxon>Gammaproteobacteria</taxon>
        <taxon>Vibrionales</taxon>
        <taxon>Vibrionaceae</taxon>
        <taxon>Vibrio</taxon>
    </lineage>
</organism>